<dbReference type="EC" id="2.7.8.26" evidence="1"/>
<dbReference type="EMBL" id="AM180088">
    <property type="protein sequence ID" value="CAJ51538.1"/>
    <property type="molecule type" value="Genomic_DNA"/>
</dbReference>
<dbReference type="RefSeq" id="WP_011570693.1">
    <property type="nucleotide sequence ID" value="NC_008212.1"/>
</dbReference>
<dbReference type="STRING" id="362976.HQ_1410A"/>
<dbReference type="GeneID" id="4193848"/>
<dbReference type="KEGG" id="hwa:HQ_1410A"/>
<dbReference type="eggNOG" id="arCOG04338">
    <property type="taxonomic scope" value="Archaea"/>
</dbReference>
<dbReference type="HOGENOM" id="CLU_057426_2_0_2"/>
<dbReference type="UniPathway" id="UPA00148">
    <property type="reaction ID" value="UER00238"/>
</dbReference>
<dbReference type="Proteomes" id="UP000001975">
    <property type="component" value="Chromosome"/>
</dbReference>
<dbReference type="GO" id="GO:0005886">
    <property type="term" value="C:plasma membrane"/>
    <property type="evidence" value="ECO:0007669"/>
    <property type="project" value="UniProtKB-SubCell"/>
</dbReference>
<dbReference type="GO" id="GO:0051073">
    <property type="term" value="F:adenosylcobinamide-GDP ribazoletransferase activity"/>
    <property type="evidence" value="ECO:0007669"/>
    <property type="project" value="UniProtKB-UniRule"/>
</dbReference>
<dbReference type="GO" id="GO:0008818">
    <property type="term" value="F:cobalamin 5'-phosphate synthase activity"/>
    <property type="evidence" value="ECO:0007669"/>
    <property type="project" value="UniProtKB-UniRule"/>
</dbReference>
<dbReference type="GO" id="GO:0009236">
    <property type="term" value="P:cobalamin biosynthetic process"/>
    <property type="evidence" value="ECO:0007669"/>
    <property type="project" value="UniProtKB-UniRule"/>
</dbReference>
<dbReference type="HAMAP" id="MF_00719">
    <property type="entry name" value="CobS"/>
    <property type="match status" value="1"/>
</dbReference>
<dbReference type="InterPro" id="IPR003805">
    <property type="entry name" value="CobS"/>
</dbReference>
<dbReference type="NCBIfam" id="TIGR00317">
    <property type="entry name" value="cobS"/>
    <property type="match status" value="1"/>
</dbReference>
<dbReference type="PANTHER" id="PTHR34148">
    <property type="entry name" value="ADENOSYLCOBINAMIDE-GDP RIBAZOLETRANSFERASE"/>
    <property type="match status" value="1"/>
</dbReference>
<dbReference type="PANTHER" id="PTHR34148:SF1">
    <property type="entry name" value="ADENOSYLCOBINAMIDE-GDP RIBAZOLETRANSFERASE"/>
    <property type="match status" value="1"/>
</dbReference>
<dbReference type="Pfam" id="PF02654">
    <property type="entry name" value="CobS"/>
    <property type="match status" value="1"/>
</dbReference>
<keyword id="KW-1003">Cell membrane</keyword>
<keyword id="KW-0169">Cobalamin biosynthesis</keyword>
<keyword id="KW-0460">Magnesium</keyword>
<keyword id="KW-0472">Membrane</keyword>
<keyword id="KW-1185">Reference proteome</keyword>
<keyword id="KW-0808">Transferase</keyword>
<keyword id="KW-0812">Transmembrane</keyword>
<keyword id="KW-1133">Transmembrane helix</keyword>
<comment type="function">
    <text evidence="1">Joins adenosylcobinamide-GDP and alpha-ribazole to generate adenosylcobalamin (Ado-cobalamin). Also synthesizes adenosylcobalamin 5'-phosphate from adenosylcobinamide-GDP and alpha-ribazole 5'-phosphate.</text>
</comment>
<comment type="catalytic activity">
    <reaction evidence="1">
        <text>alpha-ribazole + adenosylcob(III)inamide-GDP = adenosylcob(III)alamin + GMP + H(+)</text>
        <dbReference type="Rhea" id="RHEA:16049"/>
        <dbReference type="ChEBI" id="CHEBI:10329"/>
        <dbReference type="ChEBI" id="CHEBI:15378"/>
        <dbReference type="ChEBI" id="CHEBI:18408"/>
        <dbReference type="ChEBI" id="CHEBI:58115"/>
        <dbReference type="ChEBI" id="CHEBI:60487"/>
        <dbReference type="EC" id="2.7.8.26"/>
    </reaction>
</comment>
<comment type="catalytic activity">
    <reaction evidence="1">
        <text>alpha-ribazole 5'-phosphate + adenosylcob(III)inamide-GDP = adenosylcob(III)alamin 5'-phosphate + GMP + H(+)</text>
        <dbReference type="Rhea" id="RHEA:23560"/>
        <dbReference type="ChEBI" id="CHEBI:15378"/>
        <dbReference type="ChEBI" id="CHEBI:57918"/>
        <dbReference type="ChEBI" id="CHEBI:58115"/>
        <dbReference type="ChEBI" id="CHEBI:60487"/>
        <dbReference type="ChEBI" id="CHEBI:60493"/>
        <dbReference type="EC" id="2.7.8.26"/>
    </reaction>
</comment>
<comment type="cofactor">
    <cofactor evidence="1">
        <name>Mg(2+)</name>
        <dbReference type="ChEBI" id="CHEBI:18420"/>
    </cofactor>
</comment>
<comment type="pathway">
    <text evidence="1">Cofactor biosynthesis; adenosylcobalamin biosynthesis; adenosylcobalamin from cob(II)yrinate a,c-diamide: step 7/7.</text>
</comment>
<comment type="subcellular location">
    <subcellularLocation>
        <location evidence="1">Cell membrane</location>
        <topology evidence="1">Multi-pass membrane protein</topology>
    </subcellularLocation>
</comment>
<comment type="similarity">
    <text evidence="1">Belongs to the CobS family.</text>
</comment>
<protein>
    <recommendedName>
        <fullName evidence="1">Adenosylcobinamide-GDP ribazoletransferase</fullName>
        <ecNumber evidence="1">2.7.8.26</ecNumber>
    </recommendedName>
    <alternativeName>
        <fullName evidence="1">Cobalamin synthase</fullName>
    </alternativeName>
    <alternativeName>
        <fullName evidence="1">Cobalamin-5'-phosphate synthase</fullName>
    </alternativeName>
</protein>
<gene>
    <name evidence="1" type="primary">cobS</name>
    <name type="ordered locus">HQ_1410A</name>
</gene>
<organism>
    <name type="scientific">Haloquadratum walsbyi (strain DSM 16790 / HBSQ001)</name>
    <dbReference type="NCBI Taxonomy" id="362976"/>
    <lineage>
        <taxon>Archaea</taxon>
        <taxon>Methanobacteriati</taxon>
        <taxon>Methanobacteriota</taxon>
        <taxon>Stenosarchaea group</taxon>
        <taxon>Halobacteria</taxon>
        <taxon>Halobacteriales</taxon>
        <taxon>Haloferacaceae</taxon>
        <taxon>Haloquadratum</taxon>
    </lineage>
</organism>
<feature type="chain" id="PRO_1000148026" description="Adenosylcobinamide-GDP ribazoletransferase">
    <location>
        <begin position="1"/>
        <end position="254"/>
    </location>
</feature>
<feature type="transmembrane region" description="Helical" evidence="1">
    <location>
        <begin position="28"/>
        <end position="48"/>
    </location>
</feature>
<feature type="transmembrane region" description="Helical" evidence="1">
    <location>
        <begin position="62"/>
        <end position="81"/>
    </location>
</feature>
<feature type="transmembrane region" description="Helical" evidence="1">
    <location>
        <begin position="109"/>
        <end position="129"/>
    </location>
</feature>
<feature type="transmembrane region" description="Helical" evidence="1">
    <location>
        <begin position="138"/>
        <end position="158"/>
    </location>
</feature>
<feature type="transmembrane region" description="Helical" evidence="1">
    <location>
        <begin position="179"/>
        <end position="199"/>
    </location>
</feature>
<feature type="transmembrane region" description="Helical" evidence="1">
    <location>
        <begin position="200"/>
        <end position="220"/>
    </location>
</feature>
<sequence length="254" mass="26002">MVISAIRGGIGFLTRVPIGHDKKAWDAFRQTPVAFTVIGYPLGTIVALPFVLLSIVPVPTLIGVYLLILIGVTGITHIDGIADIGDAAVVHDTDDEHSRRRSVLHDSQVGVGGALAVTVTVVSLALGVLGATRTTPQVTFILVLTAEVGAKSAMALLVCTGDAAHDGLGAALIDESTPLSLFPVILALTPLLLAIPYLGASPTAAVVLTPLIVALVIKQWADNALGGISGDVLGAVNEVSRAAAIHAGVVVWML</sequence>
<name>COBS_HALWD</name>
<proteinExistence type="inferred from homology"/>
<accession>Q18KB3</accession>
<reference key="1">
    <citation type="journal article" date="2006" name="BMC Genomics">
        <title>The genome of the square archaeon Haloquadratum walsbyi: life at the limits of water activity.</title>
        <authorList>
            <person name="Bolhuis H."/>
            <person name="Palm P."/>
            <person name="Wende A."/>
            <person name="Falb M."/>
            <person name="Rampp M."/>
            <person name="Rodriguez-Valera F."/>
            <person name="Pfeiffer F."/>
            <person name="Oesterhelt D."/>
        </authorList>
    </citation>
    <scope>NUCLEOTIDE SEQUENCE [LARGE SCALE GENOMIC DNA]</scope>
    <source>
        <strain>DSM 16790 / HBSQ001</strain>
    </source>
</reference>
<evidence type="ECO:0000255" key="1">
    <source>
        <dbReference type="HAMAP-Rule" id="MF_00719"/>
    </source>
</evidence>